<reference key="1">
    <citation type="journal article" date="2003" name="DNA Res.">
        <title>Prediction of the coding sequences of mouse homologues of KIAA gene: II. The complete nucleotide sequences of 400 mouse KIAA-homologous cDNAs identified by screening of terminal sequences of cDNA clones randomly sampled from size-fractionated libraries.</title>
        <authorList>
            <person name="Okazaki N."/>
            <person name="Kikuno R."/>
            <person name="Ohara R."/>
            <person name="Inamoto S."/>
            <person name="Aizawa H."/>
            <person name="Yuasa S."/>
            <person name="Nakajima D."/>
            <person name="Nagase T."/>
            <person name="Ohara O."/>
            <person name="Koga H."/>
        </authorList>
    </citation>
    <scope>NUCLEOTIDE SEQUENCE [LARGE SCALE MRNA]</scope>
    <source>
        <tissue>Brain</tissue>
    </source>
</reference>
<reference key="2">
    <citation type="submission" date="2003-08" db="EMBL/GenBank/DDBJ databases">
        <authorList>
            <person name="Okazaki N."/>
            <person name="Kikuno R."/>
            <person name="Nagase T."/>
            <person name="Ohara O."/>
            <person name="Koga H."/>
        </authorList>
    </citation>
    <scope>SEQUENCE REVISION</scope>
</reference>
<reference key="3">
    <citation type="journal article" date="2004" name="Genome Res.">
        <title>The status, quality, and expansion of the NIH full-length cDNA project: the Mammalian Gene Collection (MGC).</title>
        <authorList>
            <consortium name="The MGC Project Team"/>
        </authorList>
    </citation>
    <scope>NUCLEOTIDE SEQUENCE [LARGE SCALE MRNA]</scope>
    <source>
        <strain>C57BL/6J</strain>
        <tissue>Brain</tissue>
    </source>
</reference>
<reference key="4">
    <citation type="journal article" date="2006" name="J. Biol. Chem.">
        <title>Protein phosphatase 6 subunit with conserved Sit4-associated protein domain targets IkappaBepsilon.</title>
        <authorList>
            <person name="Stefansson B."/>
            <person name="Brautigan D.L."/>
        </authorList>
    </citation>
    <scope>TISSUE SPECIFICITY</scope>
</reference>
<reference key="5">
    <citation type="journal article" date="2007" name="Proc. Natl. Acad. Sci. U.S.A.">
        <title>Large-scale phosphorylation analysis of mouse liver.</title>
        <authorList>
            <person name="Villen J."/>
            <person name="Beausoleil S.A."/>
            <person name="Gerber S.A."/>
            <person name="Gygi S.P."/>
        </authorList>
    </citation>
    <scope>PHOSPHORYLATION [LARGE SCALE ANALYSIS] AT SER-529; SER-530 AND SER-531</scope>
    <scope>IDENTIFICATION BY MASS SPECTROMETRY [LARGE SCALE ANALYSIS]</scope>
    <source>
        <tissue>Liver</tissue>
    </source>
</reference>
<reference key="6">
    <citation type="journal article" date="2010" name="Cell">
        <title>A tissue-specific atlas of mouse protein phosphorylation and expression.</title>
        <authorList>
            <person name="Huttlin E.L."/>
            <person name="Jedrychowski M.P."/>
            <person name="Elias J.E."/>
            <person name="Goswami T."/>
            <person name="Rad R."/>
            <person name="Beausoleil S.A."/>
            <person name="Villen J."/>
            <person name="Haas W."/>
            <person name="Sowa M.E."/>
            <person name="Gygi S.P."/>
        </authorList>
    </citation>
    <scope>PHOSPHORYLATION [LARGE SCALE ANALYSIS] AT SER-232; SER-529; SER-530; SER-531; SER-633; SER-636 AND SER-826</scope>
    <scope>IDENTIFICATION BY MASS SPECTROMETRY [LARGE SCALE ANALYSIS]</scope>
    <source>
        <tissue>Brain</tissue>
        <tissue>Brown adipose tissue</tissue>
        <tissue>Heart</tissue>
        <tissue>Kidney</tissue>
        <tissue>Liver</tissue>
        <tissue>Lung</tissue>
        <tissue>Pancreas</tissue>
        <tissue>Spleen</tissue>
        <tissue>Testis</tissue>
    </source>
</reference>
<feature type="chain" id="PRO_0000046097" description="Serine/threonine-protein phosphatase 6 regulatory subunit 1">
    <location>
        <begin position="1"/>
        <end position="856"/>
    </location>
</feature>
<feature type="region of interest" description="Interaction with PPP6C" evidence="1">
    <location>
        <begin position="10"/>
        <end position="403"/>
    </location>
</feature>
<feature type="region of interest" description="Disordered" evidence="3">
    <location>
        <begin position="621"/>
        <end position="770"/>
    </location>
</feature>
<feature type="region of interest" description="Disordered" evidence="3">
    <location>
        <begin position="792"/>
        <end position="856"/>
    </location>
</feature>
<feature type="compositionally biased region" description="Acidic residues" evidence="3">
    <location>
        <begin position="621"/>
        <end position="630"/>
    </location>
</feature>
<feature type="compositionally biased region" description="Polar residues" evidence="3">
    <location>
        <begin position="644"/>
        <end position="656"/>
    </location>
</feature>
<feature type="compositionally biased region" description="Acidic residues" evidence="3">
    <location>
        <begin position="667"/>
        <end position="683"/>
    </location>
</feature>
<feature type="compositionally biased region" description="Polar residues" evidence="3">
    <location>
        <begin position="794"/>
        <end position="809"/>
    </location>
</feature>
<feature type="compositionally biased region" description="Low complexity" evidence="3">
    <location>
        <begin position="842"/>
        <end position="856"/>
    </location>
</feature>
<feature type="modified residue" description="Phosphoserine" evidence="7">
    <location>
        <position position="232"/>
    </location>
</feature>
<feature type="modified residue" description="Phosphothreonine" evidence="2">
    <location>
        <position position="524"/>
    </location>
</feature>
<feature type="modified residue" description="Phosphoserine" evidence="6 7">
    <location>
        <position position="529"/>
    </location>
</feature>
<feature type="modified residue" description="Phosphoserine" evidence="6 7">
    <location>
        <position position="530"/>
    </location>
</feature>
<feature type="modified residue" description="Phosphoserine" evidence="6 7">
    <location>
        <position position="531"/>
    </location>
</feature>
<feature type="modified residue" description="Phosphoserine" evidence="7">
    <location>
        <position position="633"/>
    </location>
</feature>
<feature type="modified residue" description="Phosphoserine" evidence="7">
    <location>
        <position position="636"/>
    </location>
</feature>
<feature type="modified residue" description="Phosphoserine" evidence="2">
    <location>
        <position position="698"/>
    </location>
</feature>
<feature type="modified residue" description="Phosphoserine" evidence="2">
    <location>
        <position position="739"/>
    </location>
</feature>
<feature type="modified residue" description="Phosphoserine" evidence="7">
    <location>
        <position position="826"/>
    </location>
</feature>
<feature type="sequence conflict" description="In Ref. 1; BAC65732." evidence="5" ref="1">
    <original>D</original>
    <variation>N</variation>
    <location>
        <position position="309"/>
    </location>
</feature>
<feature type="sequence conflict" description="In Ref. 1; BAC65732." evidence="5" ref="1">
    <original>AEQ</original>
    <variation>G</variation>
    <location>
        <begin position="683"/>
        <end position="685"/>
    </location>
</feature>
<protein>
    <recommendedName>
        <fullName>Serine/threonine-protein phosphatase 6 regulatory subunit 1</fullName>
    </recommendedName>
    <alternativeName>
        <fullName>SAPS domain family member 1</fullName>
    </alternativeName>
</protein>
<name>PP6R1_MOUSE</name>
<gene>
    <name type="primary">Ppp6r1</name>
    <name type="synonym">Kiaa1115</name>
    <name type="synonym">Pp6r1</name>
    <name type="synonym">Saps1</name>
</gene>
<comment type="function">
    <text evidence="1">Regulatory subunit of protein phosphatase 6 (PP6). May function as a scaffolding PP6 subunit. Involved in the PP6-mediated dephosphorylation of NFKBIE opposing its degradation in response to TNF-alpha (By similarity).</text>
</comment>
<comment type="subunit">
    <text evidence="1">Protein phosphatase 6 (PP6) holoenzyme is proposed to be a heterotrimeric complex formed of the catalytic subunit, a SAPS domain-containing subunit (PP6R) and an ankyrin repeat-domain containing regulatory subunit (ARS). Interacts with PPP6C and NFKBIE. Interacts with ANKRD28, ANKRD44 and ANKRD52 (By similarity).</text>
</comment>
<comment type="subcellular location">
    <subcellularLocation>
        <location evidence="1">Cytoplasm</location>
    </subcellularLocation>
</comment>
<comment type="tissue specificity">
    <text evidence="4">Ubiquitous with highest expression in lung, spleen and bladder.</text>
</comment>
<comment type="similarity">
    <text evidence="5">Belongs to the SAPS family.</text>
</comment>
<comment type="sequence caution" evidence="5">
    <conflict type="miscellaneous discrepancy">
        <sequence resource="EMBL-CDS" id="BAC65732"/>
    </conflict>
    <text>Derived from pre-RNA.</text>
</comment>
<proteinExistence type="evidence at protein level"/>
<evidence type="ECO:0000250" key="1"/>
<evidence type="ECO:0000250" key="2">
    <source>
        <dbReference type="UniProtKB" id="Q9UPN7"/>
    </source>
</evidence>
<evidence type="ECO:0000256" key="3">
    <source>
        <dbReference type="SAM" id="MobiDB-lite"/>
    </source>
</evidence>
<evidence type="ECO:0000269" key="4">
    <source>
    </source>
</evidence>
<evidence type="ECO:0000305" key="5"/>
<evidence type="ECO:0007744" key="6">
    <source>
    </source>
</evidence>
<evidence type="ECO:0007744" key="7">
    <source>
    </source>
</evidence>
<organism>
    <name type="scientific">Mus musculus</name>
    <name type="common">Mouse</name>
    <dbReference type="NCBI Taxonomy" id="10090"/>
    <lineage>
        <taxon>Eukaryota</taxon>
        <taxon>Metazoa</taxon>
        <taxon>Chordata</taxon>
        <taxon>Craniata</taxon>
        <taxon>Vertebrata</taxon>
        <taxon>Euteleostomi</taxon>
        <taxon>Mammalia</taxon>
        <taxon>Eutheria</taxon>
        <taxon>Euarchontoglires</taxon>
        <taxon>Glires</taxon>
        <taxon>Rodentia</taxon>
        <taxon>Myomorpha</taxon>
        <taxon>Muroidea</taxon>
        <taxon>Muridae</taxon>
        <taxon>Murinae</taxon>
        <taxon>Mus</taxon>
        <taxon>Mus</taxon>
    </lineage>
</organism>
<dbReference type="EMBL" id="AK122450">
    <property type="protein sequence ID" value="BAC65732.3"/>
    <property type="status" value="ALT_SEQ"/>
    <property type="molecule type" value="Transcribed_RNA"/>
</dbReference>
<dbReference type="EMBL" id="BC053076">
    <property type="protein sequence ID" value="AAH53076.1"/>
    <property type="molecule type" value="mRNA"/>
</dbReference>
<dbReference type="CCDS" id="CCDS39737.1"/>
<dbReference type="RefSeq" id="NP_766482.2">
    <property type="nucleotide sequence ID" value="NM_172894.2"/>
</dbReference>
<dbReference type="RefSeq" id="XP_011248858.1">
    <property type="nucleotide sequence ID" value="XM_011250556.2"/>
</dbReference>
<dbReference type="SMR" id="Q7TSI3"/>
<dbReference type="BioGRID" id="232560">
    <property type="interactions" value="27"/>
</dbReference>
<dbReference type="CORUM" id="Q7TSI3"/>
<dbReference type="FunCoup" id="Q7TSI3">
    <property type="interactions" value="3785"/>
</dbReference>
<dbReference type="IntAct" id="Q7TSI3">
    <property type="interactions" value="27"/>
</dbReference>
<dbReference type="STRING" id="10090.ENSMUSP00000066736"/>
<dbReference type="GlyGen" id="Q7TSI3">
    <property type="glycosylation" value="2 sites, 1 O-linked glycan (1 site)"/>
</dbReference>
<dbReference type="iPTMnet" id="Q7TSI3"/>
<dbReference type="PhosphoSitePlus" id="Q7TSI3"/>
<dbReference type="jPOST" id="Q7TSI3"/>
<dbReference type="PaxDb" id="10090-ENSMUSP00000066736"/>
<dbReference type="ProteomicsDB" id="289798"/>
<dbReference type="Pumba" id="Q7TSI3"/>
<dbReference type="Antibodypedia" id="33046">
    <property type="antibodies" value="60 antibodies from 18 providers"/>
</dbReference>
<dbReference type="Ensembl" id="ENSMUST00000064099.8">
    <property type="protein sequence ID" value="ENSMUSP00000066736.7"/>
    <property type="gene ID" value="ENSMUSG00000052296.8"/>
</dbReference>
<dbReference type="GeneID" id="243819"/>
<dbReference type="KEGG" id="mmu:243819"/>
<dbReference type="UCSC" id="uc009eyb.1">
    <property type="organism name" value="mouse"/>
</dbReference>
<dbReference type="AGR" id="MGI:2442163"/>
<dbReference type="CTD" id="22870"/>
<dbReference type="MGI" id="MGI:2442163">
    <property type="gene designation" value="Ppp6r1"/>
</dbReference>
<dbReference type="VEuPathDB" id="HostDB:ENSMUSG00000052296"/>
<dbReference type="eggNOG" id="KOG2073">
    <property type="taxonomic scope" value="Eukaryota"/>
</dbReference>
<dbReference type="GeneTree" id="ENSGT00390000009899"/>
<dbReference type="HOGENOM" id="CLU_012598_0_0_1"/>
<dbReference type="InParanoid" id="Q7TSI3"/>
<dbReference type="OMA" id="ECKSHNP"/>
<dbReference type="OrthoDB" id="295029at2759"/>
<dbReference type="PhylomeDB" id="Q7TSI3"/>
<dbReference type="TreeFam" id="TF313227"/>
<dbReference type="Reactome" id="R-MMU-204005">
    <property type="pathway name" value="COPII-mediated vesicle transport"/>
</dbReference>
<dbReference type="BioGRID-ORCS" id="243819">
    <property type="hits" value="3 hits in 77 CRISPR screens"/>
</dbReference>
<dbReference type="ChiTaRS" id="Ppp6r1">
    <property type="organism name" value="mouse"/>
</dbReference>
<dbReference type="PRO" id="PR:Q7TSI3"/>
<dbReference type="Proteomes" id="UP000000589">
    <property type="component" value="Chromosome 7"/>
</dbReference>
<dbReference type="RNAct" id="Q7TSI3">
    <property type="molecule type" value="protein"/>
</dbReference>
<dbReference type="Bgee" id="ENSMUSG00000052296">
    <property type="expression patterns" value="Expressed in dorsal pancreas and 190 other cell types or tissues"/>
</dbReference>
<dbReference type="ExpressionAtlas" id="Q7TSI3">
    <property type="expression patterns" value="baseline and differential"/>
</dbReference>
<dbReference type="GO" id="GO:0005829">
    <property type="term" value="C:cytosol"/>
    <property type="evidence" value="ECO:0007669"/>
    <property type="project" value="Ensembl"/>
</dbReference>
<dbReference type="GO" id="GO:0019903">
    <property type="term" value="F:protein phosphatase binding"/>
    <property type="evidence" value="ECO:0000266"/>
    <property type="project" value="MGI"/>
</dbReference>
<dbReference type="GO" id="GO:0019888">
    <property type="term" value="F:protein phosphatase regulator activity"/>
    <property type="evidence" value="ECO:0000266"/>
    <property type="project" value="MGI"/>
</dbReference>
<dbReference type="GO" id="GO:0031267">
    <property type="term" value="F:small GTPase binding"/>
    <property type="evidence" value="ECO:0007669"/>
    <property type="project" value="Ensembl"/>
</dbReference>
<dbReference type="InterPro" id="IPR016024">
    <property type="entry name" value="ARM-type_fold"/>
</dbReference>
<dbReference type="InterPro" id="IPR007587">
    <property type="entry name" value="SAPS"/>
</dbReference>
<dbReference type="PANTHER" id="PTHR12634:SF13">
    <property type="entry name" value="SERINE_THREONINE-PROTEIN PHOSPHATASE 6 REGULATORY SUBUNIT 1"/>
    <property type="match status" value="1"/>
</dbReference>
<dbReference type="PANTHER" id="PTHR12634">
    <property type="entry name" value="SIT4 YEAST -ASSOCIATING PROTEIN-RELATED"/>
    <property type="match status" value="1"/>
</dbReference>
<dbReference type="Pfam" id="PF04499">
    <property type="entry name" value="SAPS"/>
    <property type="match status" value="2"/>
</dbReference>
<dbReference type="SUPFAM" id="SSF48371">
    <property type="entry name" value="ARM repeat"/>
    <property type="match status" value="1"/>
</dbReference>
<keyword id="KW-0963">Cytoplasm</keyword>
<keyword id="KW-0597">Phosphoprotein</keyword>
<keyword id="KW-1185">Reference proteome</keyword>
<sequence length="856" mass="94527">MFWKFDLHTSSHLDTLLEKEDLSLPELLDEEDVLQECKVVNRKLLDFLLQPSHLQAMVAWVTQEPPASGEERLRYKYPSVACEILTSDVPQINDALGADESLLNRLYGFLQSGDSLNPLLASFFSKVMGILINRKTDQLVSFLRKKDDFVDLLLRHIGTSAIMDLLLRLLTCVERPQLRQDVFNWLNEEKIVQRLIEQIHPSKDDNQHSNASQSLCDIIRLSREQMIQGQDSPEPDQLLATLEKQETIEQLLSNMFEGEQCQSVIVSGIQVLLTLLEPRRPRSDSVTMNNFFSSVDGQLELLAQGALDDALSSMGALHALRPRLDRFHQLLLEPPKLEPLQMTWGSLAPPLGNTRLHVVKLLASALSANAAALTQELLVLDVPNTLLDLFFHYVFNNFLHAQVEVCVSAMLSSGPPPDSSSETPVPNPIVKHLLQHCRLVERILASWEENDRVQSGGGPRKGYMGHLTRVANAVVQNAEQGPNAEQLGQLLKELPEEQQQRWEAFVSGPLAETNKKNTVDLVNTHHLHSSSDDEDDRLKEFNFPEEAVLQQAFMDFQMQRMTSAFIDHFGFNDEEFGEQEESVNAPFDKTANITFSLNADDENPNANLLEICYKDRIQQFDDEEEEEEEGQGSAESDGEYGAWQGSQPVRASQASQPPGVRSGGSTDSEEEDEEEDEEEDEGAEQAACGRTSPSSFPSPSTQPPGPSWTATFDTVPMDAPTGPPVSKEADMSSIQIPSSPPAHGSPQLRSQDPTHPSAPQEVTDSSKVAEPLAPCQALVSVADVQATLHGMRSAPSSLDSATRDPSTSVPDFKAHQSPQTMEGKRSPEHLGLPQSQSALEMPNGSTPGGPISSGSQ</sequence>
<accession>Q7TSI3</accession>
<accession>Q80TJ4</accession>